<reference key="1">
    <citation type="journal article" date="2003" name="Nucleic Acids Res.">
        <title>What's in the genome of a filamentous fungus? Analysis of the Neurospora genome sequence.</title>
        <authorList>
            <person name="Mannhaupt G."/>
            <person name="Montrone C."/>
            <person name="Haase D."/>
            <person name="Mewes H.-W."/>
            <person name="Aign V."/>
            <person name="Hoheisel J.D."/>
            <person name="Fartmann B."/>
            <person name="Nyakatura G."/>
            <person name="Kempken F."/>
            <person name="Maier J."/>
            <person name="Schulte U."/>
        </authorList>
    </citation>
    <scope>NUCLEOTIDE SEQUENCE [LARGE SCALE GENOMIC DNA]</scope>
    <source>
        <strain>ATCC 24698 / 74-OR23-1A / CBS 708.71 / DSM 1257 / FGSC 987</strain>
    </source>
</reference>
<reference key="2">
    <citation type="journal article" date="2003" name="Nature">
        <title>The genome sequence of the filamentous fungus Neurospora crassa.</title>
        <authorList>
            <person name="Galagan J.E."/>
            <person name="Calvo S.E."/>
            <person name="Borkovich K.A."/>
            <person name="Selker E.U."/>
            <person name="Read N.D."/>
            <person name="Jaffe D.B."/>
            <person name="FitzHugh W."/>
            <person name="Ma L.-J."/>
            <person name="Smirnov S."/>
            <person name="Purcell S."/>
            <person name="Rehman B."/>
            <person name="Elkins T."/>
            <person name="Engels R."/>
            <person name="Wang S."/>
            <person name="Nielsen C.B."/>
            <person name="Butler J."/>
            <person name="Endrizzi M."/>
            <person name="Qui D."/>
            <person name="Ianakiev P."/>
            <person name="Bell-Pedersen D."/>
            <person name="Nelson M.A."/>
            <person name="Werner-Washburne M."/>
            <person name="Selitrennikoff C.P."/>
            <person name="Kinsey J.A."/>
            <person name="Braun E.L."/>
            <person name="Zelter A."/>
            <person name="Schulte U."/>
            <person name="Kothe G.O."/>
            <person name="Jedd G."/>
            <person name="Mewes H.-W."/>
            <person name="Staben C."/>
            <person name="Marcotte E."/>
            <person name="Greenberg D."/>
            <person name="Roy A."/>
            <person name="Foley K."/>
            <person name="Naylor J."/>
            <person name="Stange-Thomann N."/>
            <person name="Barrett R."/>
            <person name="Gnerre S."/>
            <person name="Kamal M."/>
            <person name="Kamvysselis M."/>
            <person name="Mauceli E.W."/>
            <person name="Bielke C."/>
            <person name="Rudd S."/>
            <person name="Frishman D."/>
            <person name="Krystofova S."/>
            <person name="Rasmussen C."/>
            <person name="Metzenberg R.L."/>
            <person name="Perkins D.D."/>
            <person name="Kroken S."/>
            <person name="Cogoni C."/>
            <person name="Macino G."/>
            <person name="Catcheside D.E.A."/>
            <person name="Li W."/>
            <person name="Pratt R.J."/>
            <person name="Osmani S.A."/>
            <person name="DeSouza C.P.C."/>
            <person name="Glass N.L."/>
            <person name="Orbach M.J."/>
            <person name="Berglund J.A."/>
            <person name="Voelker R."/>
            <person name="Yarden O."/>
            <person name="Plamann M."/>
            <person name="Seiler S."/>
            <person name="Dunlap J.C."/>
            <person name="Radford A."/>
            <person name="Aramayo R."/>
            <person name="Natvig D.O."/>
            <person name="Alex L.A."/>
            <person name="Mannhaupt G."/>
            <person name="Ebbole D.J."/>
            <person name="Freitag M."/>
            <person name="Paulsen I."/>
            <person name="Sachs M.S."/>
            <person name="Lander E.S."/>
            <person name="Nusbaum C."/>
            <person name="Birren B.W."/>
        </authorList>
    </citation>
    <scope>NUCLEOTIDE SEQUENCE [LARGE SCALE GENOMIC DNA]</scope>
    <source>
        <strain>ATCC 24698 / 74-OR23-1A / CBS 708.71 / DSM 1257 / FGSC 987</strain>
    </source>
</reference>
<reference evidence="6" key="3">
    <citation type="journal article" date="2021" name="Proc. Natl. Acad. Sci. U.S.A.">
        <title>Structure of the translating Neurospora ribosome arrested by cycloheximide.</title>
        <authorList>
            <person name="Shen L."/>
            <person name="Su Z."/>
            <person name="Yang K."/>
            <person name="Wu C."/>
            <person name="Becker T."/>
            <person name="Bell-Pedersen D."/>
            <person name="Zhang J."/>
            <person name="Sachs M.S."/>
        </authorList>
    </citation>
    <scope>STRUCTURE BY ELECTRON MICROSCOPY (2.70 ANGSTROMS)</scope>
</reference>
<organism>
    <name type="scientific">Neurospora crassa (strain ATCC 24698 / 74-OR23-1A / CBS 708.71 / DSM 1257 / FGSC 987)</name>
    <dbReference type="NCBI Taxonomy" id="367110"/>
    <lineage>
        <taxon>Eukaryota</taxon>
        <taxon>Fungi</taxon>
        <taxon>Dikarya</taxon>
        <taxon>Ascomycota</taxon>
        <taxon>Pezizomycotina</taxon>
        <taxon>Sordariomycetes</taxon>
        <taxon>Sordariomycetidae</taxon>
        <taxon>Sordariales</taxon>
        <taxon>Sordariaceae</taxon>
        <taxon>Neurospora</taxon>
    </lineage>
</organism>
<gene>
    <name type="primary">rpl-24</name>
    <name type="ORF">5C2.030</name>
    <name type="ORF">NCU03150</name>
</gene>
<dbReference type="EMBL" id="BX842637">
    <property type="protein sequence ID" value="CAE76546.1"/>
    <property type="molecule type" value="Genomic_DNA"/>
</dbReference>
<dbReference type="EMBL" id="CM002236">
    <property type="protein sequence ID" value="EAA34963.1"/>
    <property type="molecule type" value="Genomic_DNA"/>
</dbReference>
<dbReference type="RefSeq" id="XP_964199.1">
    <property type="nucleotide sequence ID" value="XM_959106.3"/>
</dbReference>
<dbReference type="PDB" id="7R81">
    <property type="method" value="EM"/>
    <property type="resolution" value="2.70 A"/>
    <property type="chains" value="Y1=1-156"/>
</dbReference>
<dbReference type="PDBsum" id="7R81"/>
<dbReference type="EMDB" id="EMD-24307"/>
<dbReference type="SMR" id="Q7SDU2"/>
<dbReference type="FunCoup" id="Q7SDU2">
    <property type="interactions" value="836"/>
</dbReference>
<dbReference type="STRING" id="367110.Q7SDU2"/>
<dbReference type="PaxDb" id="5141-EFNCRP00000002832"/>
<dbReference type="EnsemblFungi" id="EAA34963">
    <property type="protein sequence ID" value="EAA34963"/>
    <property type="gene ID" value="NCU03150"/>
</dbReference>
<dbReference type="GeneID" id="3880348"/>
<dbReference type="KEGG" id="ncr:NCU03150"/>
<dbReference type="VEuPathDB" id="FungiDB:NCU03150"/>
<dbReference type="HOGENOM" id="CLU_106411_0_0_1"/>
<dbReference type="InParanoid" id="Q7SDU2"/>
<dbReference type="OMA" id="PGHGKKM"/>
<dbReference type="OrthoDB" id="1727108at2759"/>
<dbReference type="Proteomes" id="UP000001805">
    <property type="component" value="Chromosome 1, Linkage Group I"/>
</dbReference>
<dbReference type="GO" id="GO:0022625">
    <property type="term" value="C:cytosolic large ribosomal subunit"/>
    <property type="evidence" value="ECO:0000318"/>
    <property type="project" value="GO_Central"/>
</dbReference>
<dbReference type="GO" id="GO:0003729">
    <property type="term" value="F:mRNA binding"/>
    <property type="evidence" value="ECO:0000318"/>
    <property type="project" value="GO_Central"/>
</dbReference>
<dbReference type="GO" id="GO:0003735">
    <property type="term" value="F:structural constituent of ribosome"/>
    <property type="evidence" value="ECO:0000318"/>
    <property type="project" value="GO_Central"/>
</dbReference>
<dbReference type="GO" id="GO:0002181">
    <property type="term" value="P:cytoplasmic translation"/>
    <property type="evidence" value="ECO:0000318"/>
    <property type="project" value="GO_Central"/>
</dbReference>
<dbReference type="CDD" id="cd00472">
    <property type="entry name" value="Ribosomal_L24e_L24"/>
    <property type="match status" value="1"/>
</dbReference>
<dbReference type="FunFam" id="2.30.170.20:FF:000002">
    <property type="entry name" value="60S ribosomal protein L24"/>
    <property type="match status" value="1"/>
</dbReference>
<dbReference type="Gene3D" id="6.10.250.1270">
    <property type="match status" value="1"/>
</dbReference>
<dbReference type="Gene3D" id="2.30.170.20">
    <property type="entry name" value="Ribosomal protein L24e"/>
    <property type="match status" value="1"/>
</dbReference>
<dbReference type="InterPro" id="IPR038630">
    <property type="entry name" value="L24e/L24_sf"/>
</dbReference>
<dbReference type="InterPro" id="IPR056366">
    <property type="entry name" value="Ribosomal_eL24"/>
</dbReference>
<dbReference type="InterPro" id="IPR000988">
    <property type="entry name" value="Ribosomal_eL24-rel_N"/>
</dbReference>
<dbReference type="InterPro" id="IPR023442">
    <property type="entry name" value="Ribosomal_eL24_CS"/>
</dbReference>
<dbReference type="PANTHER" id="PTHR10792">
    <property type="entry name" value="60S RIBOSOMAL PROTEIN L24"/>
    <property type="match status" value="1"/>
</dbReference>
<dbReference type="PANTHER" id="PTHR10792:SF1">
    <property type="entry name" value="RIBOSOMAL PROTEIN L24"/>
    <property type="match status" value="1"/>
</dbReference>
<dbReference type="Pfam" id="PF01246">
    <property type="entry name" value="Ribosomal_L24e"/>
    <property type="match status" value="1"/>
</dbReference>
<dbReference type="SUPFAM" id="SSF57716">
    <property type="entry name" value="Glucocorticoid receptor-like (DNA-binding domain)"/>
    <property type="match status" value="1"/>
</dbReference>
<dbReference type="PROSITE" id="PS01073">
    <property type="entry name" value="RIBOSOMAL_L24E"/>
    <property type="match status" value="1"/>
</dbReference>
<accession>Q7SDU2</accession>
<name>RL24_NEUCR</name>
<protein>
    <recommendedName>
        <fullName evidence="3">Large ribosomal subunit protein eL24</fullName>
    </recommendedName>
    <alternativeName>
        <fullName>60S ribosomal protein L24</fullName>
    </alternativeName>
</protein>
<feature type="chain" id="PRO_0000136890" description="Large ribosomal subunit protein eL24">
    <location>
        <begin position="1"/>
        <end position="156"/>
    </location>
</feature>
<feature type="region of interest" description="Disordered" evidence="1">
    <location>
        <begin position="110"/>
        <end position="156"/>
    </location>
</feature>
<feature type="compositionally biased region" description="Basic and acidic residues" evidence="1">
    <location>
        <begin position="110"/>
        <end position="129"/>
    </location>
</feature>
<feature type="compositionally biased region" description="Low complexity" evidence="1">
    <location>
        <begin position="130"/>
        <end position="156"/>
    </location>
</feature>
<proteinExistence type="evidence at protein level"/>
<sequence length="156" mass="17611">MRTYDDTFSGQRIYPGKGKLYVRGDSKIFRFQNGKSESLFLQRKNPRRIAWTVLYRRQHKKGISEEVAKKRSRRTVKAQRAIVGASLEVIKERRSMRPEARSAARLAAIKESKAKKQETQAAKKAEKAKNAANPKARVTSKQGAKGAPVKVAAKSR</sequence>
<evidence type="ECO:0000256" key="1">
    <source>
        <dbReference type="SAM" id="MobiDB-lite"/>
    </source>
</evidence>
<evidence type="ECO:0000269" key="2">
    <source>
    </source>
</evidence>
<evidence type="ECO:0000303" key="3">
    <source>
    </source>
</evidence>
<evidence type="ECO:0000305" key="4"/>
<evidence type="ECO:0000305" key="5">
    <source>
    </source>
</evidence>
<evidence type="ECO:0007744" key="6">
    <source>
        <dbReference type="PDB" id="7R81"/>
    </source>
</evidence>
<keyword id="KW-0002">3D-structure</keyword>
<keyword id="KW-0963">Cytoplasm</keyword>
<keyword id="KW-1185">Reference proteome</keyword>
<keyword id="KW-0687">Ribonucleoprotein</keyword>
<keyword id="KW-0689">Ribosomal protein</keyword>
<comment type="function">
    <text evidence="5">Component of the ribosome, a large ribonucleoprotein complex responsible for the synthesis of proteins in the cell. The small ribosomal subunit (SSU) binds messenger RNAs (mRNAs) and translates the encoded message by selecting cognate aminoacyl-transfer RNA (tRNA) molecules. The large subunit (LSU) contains the ribosomal catalytic site termed the peptidyl transferase center (PTC), which catalyzes the formation of peptide bonds, thereby polymerizing the amino acids delivered by tRNAs into a polypeptide chain. The nascent polypeptides leave the ribosome through a tunnel in the LSU and interact with protein factors that function in enzymatic processing, targeting, and the membrane insertion of nascent chains at the exit of the ribosomal tunnel.</text>
</comment>
<comment type="subunit">
    <text evidence="2">Component of the large ribosomal subunit (LSU). Mature N.crassa ribosomes consist of a small (40S) and a large (60S) subunit. The 40S small subunit contains 1 molecule of ribosomal RNA (18S rRNA) and at least 32 different proteins. The large 60S subunit contains 3 rRNA molecules (26S, 5.8S and 5S rRNA) and at least 42 different proteins.</text>
</comment>
<comment type="subcellular location">
    <subcellularLocation>
        <location evidence="2">Cytoplasm</location>
    </subcellularLocation>
</comment>
<comment type="similarity">
    <text evidence="4">Belongs to the eukaryotic ribosomal protein eL24 family.</text>
</comment>